<dbReference type="EC" id="1.3.7.8" evidence="1 2"/>
<dbReference type="EC" id="1.3.99.n1" evidence="1 2"/>
<dbReference type="EMBL" id="AJ224959">
    <property type="protein sequence ID" value="CAA12247.1"/>
    <property type="molecule type" value="Genomic_DNA"/>
</dbReference>
<dbReference type="SMR" id="O87874"/>
<dbReference type="KEGG" id="ag:CAA12247"/>
<dbReference type="BioCyc" id="MetaCyc:BCRCTHAUER-MONOMER"/>
<dbReference type="SABIO-RK" id="O87874"/>
<dbReference type="GO" id="GO:0005524">
    <property type="term" value="F:ATP binding"/>
    <property type="evidence" value="ECO:0007669"/>
    <property type="project" value="UniProtKB-KW"/>
</dbReference>
<dbReference type="GO" id="GO:0018522">
    <property type="term" value="F:benzoyl-CoA reductase activity"/>
    <property type="evidence" value="ECO:0007669"/>
    <property type="project" value="UniProtKB-EC"/>
</dbReference>
<dbReference type="GO" id="GO:0051536">
    <property type="term" value="F:iron-sulfur cluster binding"/>
    <property type="evidence" value="ECO:0007669"/>
    <property type="project" value="UniProtKB-KW"/>
</dbReference>
<dbReference type="GO" id="GO:0046872">
    <property type="term" value="F:metal ion binding"/>
    <property type="evidence" value="ECO:0007669"/>
    <property type="project" value="UniProtKB-KW"/>
</dbReference>
<dbReference type="GO" id="GO:0009056">
    <property type="term" value="P:catabolic process"/>
    <property type="evidence" value="ECO:0007669"/>
    <property type="project" value="UniProtKB-KW"/>
</dbReference>
<dbReference type="Gene3D" id="1.20.1270.370">
    <property type="match status" value="1"/>
</dbReference>
<dbReference type="Gene3D" id="3.40.50.11890">
    <property type="match status" value="1"/>
</dbReference>
<dbReference type="Gene3D" id="3.40.50.11900">
    <property type="match status" value="1"/>
</dbReference>
<dbReference type="InterPro" id="IPR011958">
    <property type="entry name" value="Benzoyl_CoA_Rdtase_C"/>
</dbReference>
<dbReference type="InterPro" id="IPR010327">
    <property type="entry name" value="FldB/FldC_alpha/beta"/>
</dbReference>
<dbReference type="NCBIfam" id="TIGR02263">
    <property type="entry name" value="benz_CoA_red_C"/>
    <property type="match status" value="1"/>
</dbReference>
<dbReference type="PANTHER" id="PTHR30548">
    <property type="entry name" value="2-HYDROXYGLUTARYL-COA DEHYDRATASE, D-COMPONENT-RELATED"/>
    <property type="match status" value="1"/>
</dbReference>
<dbReference type="PANTHER" id="PTHR30548:SF5">
    <property type="entry name" value="SUBUNIT OF OXYGEN-SENSITIVE 2-HYDROXYISOCAPROYL-COA DEHYDRATASE"/>
    <property type="match status" value="1"/>
</dbReference>
<dbReference type="Pfam" id="PF06050">
    <property type="entry name" value="HGD-D"/>
    <property type="match status" value="1"/>
</dbReference>
<protein>
    <recommendedName>
        <fullName>Benzoyl-CoA reductase subunit C</fullName>
        <ecNumber evidence="1 2">1.3.7.8</ecNumber>
    </recommendedName>
    <alternativeName>
        <fullName>3-hydroxybenzoyl-CoA reductase subunit gamma</fullName>
        <ecNumber evidence="1 2">1.3.99.n1</ecNumber>
    </alternativeName>
</protein>
<evidence type="ECO:0000269" key="1">
    <source>
    </source>
</evidence>
<evidence type="ECO:0000269" key="2">
    <source>
    </source>
</evidence>
<evidence type="ECO:0000269" key="3">
    <source>
    </source>
</evidence>
<evidence type="ECO:0000305" key="4"/>
<evidence type="ECO:0000305" key="5">
    <source>
    </source>
</evidence>
<feature type="initiator methionine" description="Removed" evidence="3">
    <location>
        <position position="1"/>
    </location>
</feature>
<feature type="chain" id="PRO_0000350732" description="Benzoyl-CoA reductase subunit C">
    <location>
        <begin position="2"/>
        <end position="386"/>
    </location>
</feature>
<gene>
    <name type="primary">bcrC</name>
</gene>
<proteinExistence type="evidence at protein level"/>
<name>BCRC_THAAR</name>
<keyword id="KW-0058">Aromatic hydrocarbons catabolism</keyword>
<keyword id="KW-0067">ATP-binding</keyword>
<keyword id="KW-0903">Direct protein sequencing</keyword>
<keyword id="KW-0285">Flavoprotein</keyword>
<keyword id="KW-0408">Iron</keyword>
<keyword id="KW-0411">Iron-sulfur</keyword>
<keyword id="KW-0479">Metal-binding</keyword>
<keyword id="KW-0547">Nucleotide-binding</keyword>
<keyword id="KW-0560">Oxidoreductase</keyword>
<accession>O87874</accession>
<reference key="1">
    <citation type="journal article" date="1998" name="Eur. J. Biochem.">
        <title>Genes coding for the benzoyl-CoA pathway of anaerobic aromatic metabolism in the bacterium Thauera aromatica.</title>
        <authorList>
            <person name="Breese K."/>
            <person name="Boll M."/>
            <person name="Alt-Moerbe J."/>
            <person name="Schaegger H."/>
            <person name="Fuchs G."/>
        </authorList>
    </citation>
    <scope>NUCLEOTIDE SEQUENCE [GENOMIC DNA]</scope>
    <scope>PROTEIN SEQUENCE OF 2-18; 119-130 AND 218-229</scope>
    <scope>SUBUNIT</scope>
    <source>
        <strain>DSM 6984 / CIP 107765 / K172</strain>
    </source>
</reference>
<reference key="2">
    <citation type="journal article" date="1995" name="Eur. J. Biochem.">
        <title>Benzoyl-coenzyme A reductase (dearomatizing), a key enzyme of anaerobic aromatic metabolism. ATP dependence of the reaction, purification and some properties of the enzyme from Thauera aromatica strain K172.</title>
        <authorList>
            <person name="Boll M."/>
            <person name="Fuchs G."/>
        </authorList>
    </citation>
    <scope>FUNCTION</scope>
    <scope>CATALYTIC ACTIVITY</scope>
    <scope>SUBSTRATE SPECIFICITY</scope>
    <scope>BIOPHYSICOCHEMICAL PROPERTIES</scope>
    <scope>COFACTOR</scope>
    <source>
        <strain>DSM 6984 / CIP 107765 / K172</strain>
    </source>
</reference>
<reference key="3">
    <citation type="journal article" date="2001" name="J. Bacteriol.">
        <title>Anaerobic metabolism of 3-hydroxybenzoate by the denitrifying bacterium Thauera aromatica.</title>
        <authorList>
            <person name="Laempe D."/>
            <person name="Jahn M."/>
            <person name="Breese K."/>
            <person name="Schaegger H."/>
            <person name="Fuchs G."/>
        </authorList>
    </citation>
    <scope>CATALYTIC ACTIVITY</scope>
    <scope>BIOPHYSICOCHEMICAL PROPERTIES</scope>
    <source>
        <strain>DSM 6984 / CIP 107765 / K172</strain>
    </source>
</reference>
<organism>
    <name type="scientific">Thauera aromatica</name>
    <dbReference type="NCBI Taxonomy" id="59405"/>
    <lineage>
        <taxon>Bacteria</taxon>
        <taxon>Pseudomonadati</taxon>
        <taxon>Pseudomonadota</taxon>
        <taxon>Betaproteobacteria</taxon>
        <taxon>Rhodocyclales</taxon>
        <taxon>Zoogloeaceae</taxon>
        <taxon>Thauera</taxon>
    </lineage>
</organism>
<sequence>MSTADIIARCEALYEDLDFTAARQWKEADPSRKVIAYMPVYVPREIIHAAGMLPLGIMGGGDGLEVIHGDAFYQSYICRIPRSTIELGLSKRMDFVDGMLFPSICDVIRNLSGMWKLMFPGKYVRYFDVPQNYRDDVGGNYYTAELNELREGLEHLSGRKITDDALRASIKVYNENRKLVQDVYGLRSREPWKVPSADVYLLMRAGLVLPVEEHNQMLKDYLAAAVKVEAQKRDNCRVIINGSFCEQPPLNLIKSIELSGCYIVDDDYMIVHRFLRNEVSTAGDPMQNLSLAFLHESISTAAKYDDKEEDKGKYLLEQVRTNAAEGVIFAAPSFCDPALLERPMLADRCSENKVPYISFKYAENSGQMQPIREQAGTFADSIKLWS</sequence>
<comment type="function">
    <text evidence="2">Catalyzes the anaerobic reduction of benzoyl-CoA and 3-hydroxybenzoyl-CoA to form cyclohexa-1,5-diene-1-carbonyl-CoA and 3-hydroxycyclohexa-1,5-diene-1-carbonyl-CoA, respectively. The enzyme also reduces other benzoyl-CoA analogs with small substituents at the aromatic ring.</text>
</comment>
<comment type="catalytic activity">
    <reaction evidence="1 2">
        <text>cyclohexa-1,5-diene-1-carbonyl-CoA + oxidized 2[4Fe-4S]-[ferredoxin] + 2 ADP + 2 phosphate = reduced 2[4Fe-4S]-[ferredoxin] + benzoyl-CoA + 2 ATP + 2 H2O</text>
        <dbReference type="Rhea" id="RHEA:30199"/>
        <dbReference type="Rhea" id="RHEA-COMP:10002"/>
        <dbReference type="Rhea" id="RHEA-COMP:10004"/>
        <dbReference type="ChEBI" id="CHEBI:15377"/>
        <dbReference type="ChEBI" id="CHEBI:30616"/>
        <dbReference type="ChEBI" id="CHEBI:33722"/>
        <dbReference type="ChEBI" id="CHEBI:33723"/>
        <dbReference type="ChEBI" id="CHEBI:43474"/>
        <dbReference type="ChEBI" id="CHEBI:57369"/>
        <dbReference type="ChEBI" id="CHEBI:57374"/>
        <dbReference type="ChEBI" id="CHEBI:456216"/>
        <dbReference type="EC" id="1.3.7.8"/>
    </reaction>
</comment>
<comment type="catalytic activity">
    <reaction evidence="1 2">
        <text>3-hydroxybenzoyl-CoA + AH2 + 2 ATP + 2 H2O = 3-hydroxycyclohexa-1,5-diene-1-carbonyl-CoA + A + 2 ADP + 2 phosphate + 2 H(+)</text>
        <dbReference type="Rhea" id="RHEA:25420"/>
        <dbReference type="ChEBI" id="CHEBI:13193"/>
        <dbReference type="ChEBI" id="CHEBI:15377"/>
        <dbReference type="ChEBI" id="CHEBI:15378"/>
        <dbReference type="ChEBI" id="CHEBI:17499"/>
        <dbReference type="ChEBI" id="CHEBI:30616"/>
        <dbReference type="ChEBI" id="CHEBI:43474"/>
        <dbReference type="ChEBI" id="CHEBI:57342"/>
        <dbReference type="ChEBI" id="CHEBI:58801"/>
        <dbReference type="ChEBI" id="CHEBI:456216"/>
        <dbReference type="EC" id="1.3.99.n1"/>
    </reaction>
</comment>
<comment type="cofactor">
    <cofactor evidence="2">
        <name>iron-sulfur cluster</name>
        <dbReference type="ChEBI" id="CHEBI:30408"/>
    </cofactor>
</comment>
<comment type="cofactor">
    <cofactor evidence="5">
        <name>an oxidized flavin</name>
        <dbReference type="ChEBI" id="CHEBI:60531"/>
    </cofactor>
</comment>
<comment type="biophysicochemical properties">
    <kinetics>
        <KM evidence="1 2">15 uM for benzoyl-CoA</KM>
        <KM evidence="1 2">20 uM for 3-hydroxybenzoyl-CoA</KM>
        <KM evidence="1 2">600 uM for ATP</KM>
    </kinetics>
    <phDependence>
        <text evidence="1 2">Optimum pH is 7.2-7.5.</text>
    </phDependence>
</comment>
<comment type="subunit">
    <text evidence="3">Heterotetramer composed of A, B, C, and D subunits.</text>
</comment>
<comment type="similarity">
    <text evidence="4">Belongs to the FldB/FldC dehydratase alpha/beta subunit family.</text>
</comment>